<accession>Q1RG28</accession>
<feature type="chain" id="PRO_1000006548" description="Deoxyguanosinetriphosphate triphosphohydrolase">
    <location>
        <begin position="1"/>
        <end position="505"/>
    </location>
</feature>
<feature type="domain" description="HD" evidence="2">
    <location>
        <begin position="66"/>
        <end position="273"/>
    </location>
</feature>
<dbReference type="EC" id="3.1.5.1" evidence="1"/>
<dbReference type="EMBL" id="CP000243">
    <property type="protein sequence ID" value="ABE05686.1"/>
    <property type="molecule type" value="Genomic_DNA"/>
</dbReference>
<dbReference type="RefSeq" id="WP_000057086.1">
    <property type="nucleotide sequence ID" value="NZ_CP064825.1"/>
</dbReference>
<dbReference type="SMR" id="Q1RG28"/>
<dbReference type="KEGG" id="eci:UTI89_C0176"/>
<dbReference type="HOGENOM" id="CLU_028163_2_1_6"/>
<dbReference type="Proteomes" id="UP000001952">
    <property type="component" value="Chromosome"/>
</dbReference>
<dbReference type="GO" id="GO:0008832">
    <property type="term" value="F:dGTPase activity"/>
    <property type="evidence" value="ECO:0007669"/>
    <property type="project" value="UniProtKB-UniRule"/>
</dbReference>
<dbReference type="GO" id="GO:0000287">
    <property type="term" value="F:magnesium ion binding"/>
    <property type="evidence" value="ECO:0007669"/>
    <property type="project" value="UniProtKB-UniRule"/>
</dbReference>
<dbReference type="GO" id="GO:0006203">
    <property type="term" value="P:dGTP catabolic process"/>
    <property type="evidence" value="ECO:0007669"/>
    <property type="project" value="InterPro"/>
</dbReference>
<dbReference type="CDD" id="cd00077">
    <property type="entry name" value="HDc"/>
    <property type="match status" value="1"/>
</dbReference>
<dbReference type="FunFam" id="1.10.3210.10:FF:000009">
    <property type="entry name" value="Deoxyguanosinetriphosphate triphosphohydrolase"/>
    <property type="match status" value="1"/>
</dbReference>
<dbReference type="FunFam" id="1.10.3210.10:FF:000010">
    <property type="entry name" value="Deoxyguanosinetriphosphate triphosphohydrolase"/>
    <property type="match status" value="1"/>
</dbReference>
<dbReference type="FunFam" id="1.10.3410.10:FF:000001">
    <property type="entry name" value="Deoxyguanosinetriphosphate triphosphohydrolase"/>
    <property type="match status" value="1"/>
</dbReference>
<dbReference type="Gene3D" id="1.10.3210.10">
    <property type="entry name" value="Hypothetical protein af1432"/>
    <property type="match status" value="2"/>
</dbReference>
<dbReference type="Gene3D" id="1.10.3410.10">
    <property type="entry name" value="putative deoxyguanosinetriphosphate triphosphohydrolase like domain"/>
    <property type="match status" value="1"/>
</dbReference>
<dbReference type="HAMAP" id="MF_00030">
    <property type="entry name" value="dGTPase_type1"/>
    <property type="match status" value="1"/>
</dbReference>
<dbReference type="InterPro" id="IPR023293">
    <property type="entry name" value="dGTP_triP_hydro_central_sf"/>
</dbReference>
<dbReference type="InterPro" id="IPR006261">
    <property type="entry name" value="dGTPase"/>
</dbReference>
<dbReference type="InterPro" id="IPR050135">
    <property type="entry name" value="dGTPase-like"/>
</dbReference>
<dbReference type="InterPro" id="IPR020779">
    <property type="entry name" value="dNTPase_1"/>
</dbReference>
<dbReference type="InterPro" id="IPR003607">
    <property type="entry name" value="HD/PDEase_dom"/>
</dbReference>
<dbReference type="InterPro" id="IPR006674">
    <property type="entry name" value="HD_domain"/>
</dbReference>
<dbReference type="NCBIfam" id="TIGR01353">
    <property type="entry name" value="dGTP_triPase"/>
    <property type="match status" value="1"/>
</dbReference>
<dbReference type="NCBIfam" id="NF003429">
    <property type="entry name" value="PRK04926.1"/>
    <property type="match status" value="1"/>
</dbReference>
<dbReference type="PANTHER" id="PTHR11373:SF32">
    <property type="entry name" value="DEOXYGUANOSINETRIPHOSPHATE TRIPHOSPHOHYDROLASE"/>
    <property type="match status" value="1"/>
</dbReference>
<dbReference type="PANTHER" id="PTHR11373">
    <property type="entry name" value="DEOXYNUCLEOSIDE TRIPHOSPHATE TRIPHOSPHOHYDROLASE"/>
    <property type="match status" value="1"/>
</dbReference>
<dbReference type="Pfam" id="PF01966">
    <property type="entry name" value="HD"/>
    <property type="match status" value="1"/>
</dbReference>
<dbReference type="SMART" id="SM00471">
    <property type="entry name" value="HDc"/>
    <property type="match status" value="1"/>
</dbReference>
<dbReference type="SUPFAM" id="SSF109604">
    <property type="entry name" value="HD-domain/PDEase-like"/>
    <property type="match status" value="1"/>
</dbReference>
<dbReference type="PROSITE" id="PS51831">
    <property type="entry name" value="HD"/>
    <property type="match status" value="1"/>
</dbReference>
<organism>
    <name type="scientific">Escherichia coli (strain UTI89 / UPEC)</name>
    <dbReference type="NCBI Taxonomy" id="364106"/>
    <lineage>
        <taxon>Bacteria</taxon>
        <taxon>Pseudomonadati</taxon>
        <taxon>Pseudomonadota</taxon>
        <taxon>Gammaproteobacteria</taxon>
        <taxon>Enterobacterales</taxon>
        <taxon>Enterobacteriaceae</taxon>
        <taxon>Escherichia</taxon>
    </lineage>
</organism>
<reference key="1">
    <citation type="journal article" date="2006" name="Proc. Natl. Acad. Sci. U.S.A.">
        <title>Identification of genes subject to positive selection in uropathogenic strains of Escherichia coli: a comparative genomics approach.</title>
        <authorList>
            <person name="Chen S.L."/>
            <person name="Hung C.-S."/>
            <person name="Xu J."/>
            <person name="Reigstad C.S."/>
            <person name="Magrini V."/>
            <person name="Sabo A."/>
            <person name="Blasiar D."/>
            <person name="Bieri T."/>
            <person name="Meyer R.R."/>
            <person name="Ozersky P."/>
            <person name="Armstrong J.R."/>
            <person name="Fulton R.S."/>
            <person name="Latreille J.P."/>
            <person name="Spieth J."/>
            <person name="Hooton T.M."/>
            <person name="Mardis E.R."/>
            <person name="Hultgren S.J."/>
            <person name="Gordon J.I."/>
        </authorList>
    </citation>
    <scope>NUCLEOTIDE SEQUENCE [LARGE SCALE GENOMIC DNA]</scope>
    <source>
        <strain>UTI89 / UPEC</strain>
    </source>
</reference>
<proteinExistence type="inferred from homology"/>
<gene>
    <name evidence="1" type="primary">dgt</name>
    <name type="ordered locus">UTI89_C0176</name>
</gene>
<name>DGTP_ECOUT</name>
<sequence length="505" mass="59374">MAQIDFRKKINWHRRYRSPQGVKTEHEILRIFESDRGRIINSPAIRRLQQKTQVFPLERNAAVRTRLTHSMEVQQVGRYIAKEILSRLKELKLLEAYGLDELTGPFESIVEMSCLMHDIGNPPFGHFGEAAINDWFRQRLYPEDAESQPLTDDRCSVAALRLRDGEEPLNALRRKIRQDLCHFEGNAQGIRLVHTLMRMNLTWAQVGGILKYTRPAWWRGETPETHHYLMKKPGYYLSEEAYIARLRKELNLALYSRFPLTWIMEAADDISYCVADLEDAVEKRIFTVEQLYHHLHEAWGQHEKGSLFSLVVENAWEKSRSNSLSRSTEDQFFMYLRVNTLNKLVPYAAQRFIDNLPAIFAGTFNHALLEDASECSDLLKLYKNVAVKHVFSHPDVEQLELQGYRVISGLLEIYRPLLNLPLSDFTELVEKERVKRFPIETRLFHKLSTRHRLAYVEAVSKLPSDSPEFPLWEYYYRCRLLQDYISGMTDLYAWDEYRRLMAVEQ</sequence>
<keyword id="KW-0378">Hydrolase</keyword>
<keyword id="KW-0460">Magnesium</keyword>
<comment type="function">
    <text evidence="1">dGTPase preferentially hydrolyzes dGTP over the other canonical NTPs.</text>
</comment>
<comment type="catalytic activity">
    <reaction evidence="1">
        <text>dGTP + H2O = 2'-deoxyguanosine + triphosphate + H(+)</text>
        <dbReference type="Rhea" id="RHEA:15193"/>
        <dbReference type="ChEBI" id="CHEBI:15377"/>
        <dbReference type="ChEBI" id="CHEBI:15378"/>
        <dbReference type="ChEBI" id="CHEBI:17172"/>
        <dbReference type="ChEBI" id="CHEBI:18036"/>
        <dbReference type="ChEBI" id="CHEBI:61429"/>
        <dbReference type="EC" id="3.1.5.1"/>
    </reaction>
</comment>
<comment type="cofactor">
    <cofactor evidence="1">
        <name>Mg(2+)</name>
        <dbReference type="ChEBI" id="CHEBI:18420"/>
    </cofactor>
</comment>
<comment type="subunit">
    <text evidence="1">Homotetramer.</text>
</comment>
<comment type="similarity">
    <text evidence="1">Belongs to the dGTPase family. Type 1 subfamily.</text>
</comment>
<protein>
    <recommendedName>
        <fullName evidence="1">Deoxyguanosinetriphosphate triphosphohydrolase</fullName>
        <shortName evidence="1">dGTP triphosphohydrolase</shortName>
        <shortName evidence="1">dGTPase</shortName>
        <ecNumber evidence="1">3.1.5.1</ecNumber>
    </recommendedName>
</protein>
<evidence type="ECO:0000255" key="1">
    <source>
        <dbReference type="HAMAP-Rule" id="MF_00030"/>
    </source>
</evidence>
<evidence type="ECO:0000255" key="2">
    <source>
        <dbReference type="PROSITE-ProRule" id="PRU01175"/>
    </source>
</evidence>